<name>GRASS_DROME</name>
<dbReference type="EC" id="3.4.21.-" evidence="2"/>
<dbReference type="EMBL" id="AE014297">
    <property type="protein sequence ID" value="AAF56675.1"/>
    <property type="molecule type" value="Genomic_DNA"/>
</dbReference>
<dbReference type="EMBL" id="AE014297">
    <property type="protein sequence ID" value="AAF56676.1"/>
    <property type="molecule type" value="Genomic_DNA"/>
</dbReference>
<dbReference type="EMBL" id="AY121710">
    <property type="protein sequence ID" value="AAM52037.1"/>
    <property type="status" value="ALT_INIT"/>
    <property type="molecule type" value="mRNA"/>
</dbReference>
<dbReference type="EMBL" id="BT003238">
    <property type="protein sequence ID" value="AAO24994.1"/>
    <property type="molecule type" value="mRNA"/>
</dbReference>
<dbReference type="RefSeq" id="NP_651543.1">
    <molecule id="Q9VB68-1"/>
    <property type="nucleotide sequence ID" value="NM_143286.3"/>
</dbReference>
<dbReference type="RefSeq" id="NP_733197.1">
    <molecule id="Q9VB68-2"/>
    <property type="nucleotide sequence ID" value="NM_170318.3"/>
</dbReference>
<dbReference type="PDB" id="2XXL">
    <property type="method" value="X-ray"/>
    <property type="resolution" value="1.80 A"/>
    <property type="chains" value="A/B=1-377"/>
</dbReference>
<dbReference type="PDBsum" id="2XXL"/>
<dbReference type="SMR" id="Q9VB68"/>
<dbReference type="FunCoup" id="Q9VB68">
    <property type="interactions" value="91"/>
</dbReference>
<dbReference type="STRING" id="7227.FBpp0084482"/>
<dbReference type="MEROPS" id="S01.502"/>
<dbReference type="GlyCosmos" id="Q9VB68">
    <property type="glycosylation" value="2 sites, No reported glycans"/>
</dbReference>
<dbReference type="GlyGen" id="Q9VB68">
    <property type="glycosylation" value="2 sites"/>
</dbReference>
<dbReference type="iPTMnet" id="Q9VB68"/>
<dbReference type="PaxDb" id="7227-FBpp0084482"/>
<dbReference type="DNASU" id="43273"/>
<dbReference type="EnsemblMetazoa" id="FBtr0085111">
    <molecule id="Q9VB68-2"/>
    <property type="protein sequence ID" value="FBpp0084481"/>
    <property type="gene ID" value="FBgn0039494"/>
</dbReference>
<dbReference type="EnsemblMetazoa" id="FBtr0085112">
    <molecule id="Q9VB68-1"/>
    <property type="protein sequence ID" value="FBpp0084482"/>
    <property type="gene ID" value="FBgn0039494"/>
</dbReference>
<dbReference type="GeneID" id="43273"/>
<dbReference type="KEGG" id="dme:Dmel_CG5896"/>
<dbReference type="UCSC" id="CG5896-RA">
    <property type="organism name" value="d. melanogaster"/>
</dbReference>
<dbReference type="UCSC" id="CG5896-RB">
    <molecule id="Q9VB68-1"/>
    <property type="organism name" value="d. melanogaster"/>
</dbReference>
<dbReference type="AGR" id="FB:FBgn0039494"/>
<dbReference type="CTD" id="43273"/>
<dbReference type="FlyBase" id="FBgn0039494">
    <property type="gene designation" value="grass"/>
</dbReference>
<dbReference type="VEuPathDB" id="VectorBase:FBgn0039494"/>
<dbReference type="eggNOG" id="KOG3627">
    <property type="taxonomic scope" value="Eukaryota"/>
</dbReference>
<dbReference type="GeneTree" id="ENSGT00940000169352"/>
<dbReference type="InParanoid" id="Q9VB68"/>
<dbReference type="OMA" id="DYVQWIT"/>
<dbReference type="OrthoDB" id="547031at2759"/>
<dbReference type="PhylomeDB" id="Q9VB68"/>
<dbReference type="BioGRID-ORCS" id="43273">
    <property type="hits" value="0 hits in 1 CRISPR screen"/>
</dbReference>
<dbReference type="EvolutionaryTrace" id="Q9VB68"/>
<dbReference type="GenomeRNAi" id="43273"/>
<dbReference type="PRO" id="PR:Q9VB68"/>
<dbReference type="Proteomes" id="UP000000803">
    <property type="component" value="Chromosome 3R"/>
</dbReference>
<dbReference type="Bgee" id="FBgn0039494">
    <property type="expression patterns" value="Expressed in tendon cell (Drosophila) in body wall and 78 other cell types or tissues"/>
</dbReference>
<dbReference type="ExpressionAtlas" id="Q9VB68">
    <property type="expression patterns" value="baseline and differential"/>
</dbReference>
<dbReference type="GO" id="GO:0005576">
    <property type="term" value="C:extracellular region"/>
    <property type="evidence" value="ECO:0007005"/>
    <property type="project" value="FlyBase"/>
</dbReference>
<dbReference type="GO" id="GO:0005615">
    <property type="term" value="C:extracellular space"/>
    <property type="evidence" value="ECO:0000318"/>
    <property type="project" value="GO_Central"/>
</dbReference>
<dbReference type="GO" id="GO:0005509">
    <property type="term" value="F:calcium ion binding"/>
    <property type="evidence" value="ECO:0000314"/>
    <property type="project" value="UniProtKB"/>
</dbReference>
<dbReference type="GO" id="GO:0017171">
    <property type="term" value="F:serine hydrolase activity"/>
    <property type="evidence" value="ECO:0007005"/>
    <property type="project" value="FlyBase"/>
</dbReference>
<dbReference type="GO" id="GO:0004252">
    <property type="term" value="F:serine-type endopeptidase activity"/>
    <property type="evidence" value="ECO:0000255"/>
    <property type="project" value="FlyBase"/>
</dbReference>
<dbReference type="GO" id="GO:0050832">
    <property type="term" value="P:defense response to fungus"/>
    <property type="evidence" value="ECO:0000315"/>
    <property type="project" value="UniProtKB"/>
</dbReference>
<dbReference type="GO" id="GO:0050830">
    <property type="term" value="P:defense response to Gram-positive bacterium"/>
    <property type="evidence" value="ECO:0000315"/>
    <property type="project" value="UniProtKB"/>
</dbReference>
<dbReference type="GO" id="GO:0045087">
    <property type="term" value="P:innate immune response"/>
    <property type="evidence" value="ECO:0000315"/>
    <property type="project" value="UniProtKB"/>
</dbReference>
<dbReference type="GO" id="GO:0006963">
    <property type="term" value="P:positive regulation of antibacterial peptide biosynthetic process"/>
    <property type="evidence" value="ECO:0000316"/>
    <property type="project" value="FlyBase"/>
</dbReference>
<dbReference type="GO" id="GO:0002804">
    <property type="term" value="P:positive regulation of antifungal peptide production"/>
    <property type="evidence" value="ECO:0000315"/>
    <property type="project" value="UniProtKB"/>
</dbReference>
<dbReference type="GO" id="GO:0006508">
    <property type="term" value="P:proteolysis"/>
    <property type="evidence" value="ECO:0000255"/>
    <property type="project" value="FlyBase"/>
</dbReference>
<dbReference type="GO" id="GO:0160032">
    <property type="term" value="P:Toll receptor ligand protein activation cascade"/>
    <property type="evidence" value="ECO:0000315"/>
    <property type="project" value="UniProtKB"/>
</dbReference>
<dbReference type="CDD" id="cd00190">
    <property type="entry name" value="Tryp_SPc"/>
    <property type="match status" value="1"/>
</dbReference>
<dbReference type="FunFam" id="2.40.10.10:FF:000028">
    <property type="entry name" value="Serine protease easter"/>
    <property type="match status" value="1"/>
</dbReference>
<dbReference type="FunFam" id="2.40.10.10:FF:000078">
    <property type="entry name" value="Serine protease H137"/>
    <property type="match status" value="1"/>
</dbReference>
<dbReference type="Gene3D" id="3.30.1640.30">
    <property type="match status" value="1"/>
</dbReference>
<dbReference type="Gene3D" id="2.40.10.10">
    <property type="entry name" value="Trypsin-like serine proteases"/>
    <property type="match status" value="2"/>
</dbReference>
<dbReference type="InterPro" id="IPR022700">
    <property type="entry name" value="CLIP"/>
</dbReference>
<dbReference type="InterPro" id="IPR038565">
    <property type="entry name" value="CLIP_sf"/>
</dbReference>
<dbReference type="InterPro" id="IPR009003">
    <property type="entry name" value="Peptidase_S1_PA"/>
</dbReference>
<dbReference type="InterPro" id="IPR043504">
    <property type="entry name" value="Peptidase_S1_PA_chymotrypsin"/>
</dbReference>
<dbReference type="InterPro" id="IPR001314">
    <property type="entry name" value="Peptidase_S1A"/>
</dbReference>
<dbReference type="InterPro" id="IPR051487">
    <property type="entry name" value="Ser/Thr_Proteases_Immune/Dev"/>
</dbReference>
<dbReference type="InterPro" id="IPR001254">
    <property type="entry name" value="Trypsin_dom"/>
</dbReference>
<dbReference type="InterPro" id="IPR018114">
    <property type="entry name" value="TRYPSIN_HIS"/>
</dbReference>
<dbReference type="InterPro" id="IPR033116">
    <property type="entry name" value="TRYPSIN_SER"/>
</dbReference>
<dbReference type="PANTHER" id="PTHR24256">
    <property type="entry name" value="TRYPTASE-RELATED"/>
    <property type="match status" value="1"/>
</dbReference>
<dbReference type="Pfam" id="PF12032">
    <property type="entry name" value="CLIP"/>
    <property type="match status" value="1"/>
</dbReference>
<dbReference type="Pfam" id="PF00089">
    <property type="entry name" value="Trypsin"/>
    <property type="match status" value="1"/>
</dbReference>
<dbReference type="PRINTS" id="PR00722">
    <property type="entry name" value="CHYMOTRYPSIN"/>
</dbReference>
<dbReference type="SMART" id="SM00680">
    <property type="entry name" value="CLIP"/>
    <property type="match status" value="1"/>
</dbReference>
<dbReference type="SMART" id="SM00020">
    <property type="entry name" value="Tryp_SPc"/>
    <property type="match status" value="1"/>
</dbReference>
<dbReference type="SUPFAM" id="SSF50494">
    <property type="entry name" value="Trypsin-like serine proteases"/>
    <property type="match status" value="1"/>
</dbReference>
<dbReference type="PROSITE" id="PS51888">
    <property type="entry name" value="CLIP"/>
    <property type="match status" value="1"/>
</dbReference>
<dbReference type="PROSITE" id="PS50240">
    <property type="entry name" value="TRYPSIN_DOM"/>
    <property type="match status" value="1"/>
</dbReference>
<dbReference type="PROSITE" id="PS00134">
    <property type="entry name" value="TRYPSIN_HIS"/>
    <property type="match status" value="1"/>
</dbReference>
<dbReference type="PROSITE" id="PS00135">
    <property type="entry name" value="TRYPSIN_SER"/>
    <property type="match status" value="1"/>
</dbReference>
<proteinExistence type="evidence at protein level"/>
<comment type="function">
    <text evidence="1 4 5">Endopeptidase (By similarity). Plays a key role in innate immunity by activating the Toll pathway in response to fungal and Gram-positive bacterial infections, presumably downstream of pattern-recognition receptors (PRR), such as PGRP-SA, GNBP1 and GNBP3, and upstream of spz processing enzyme SPE (PubMed:16631589, PubMed:18724373).</text>
</comment>
<comment type="subcellular location">
    <subcellularLocation>
        <location evidence="9">Secreted</location>
    </subcellularLocation>
    <text evidence="8">Probably secreted in the hemolymph.</text>
</comment>
<comment type="alternative products">
    <event type="alternative splicing"/>
    <isoform>
        <id>Q9VB68-1</id>
        <name evidence="12">B</name>
        <sequence type="displayed"/>
    </isoform>
    <isoform>
        <id>Q9VB68-2</id>
        <name evidence="12">A</name>
        <sequence type="described" ref="VSP_059329"/>
    </isoform>
</comment>
<comment type="domain">
    <text evidence="3">The clip domain consists of 35-55 residues which are 'knitted' together usually by 3 conserved disulfide bonds forming a clip-like compact structure.</text>
</comment>
<comment type="PTM">
    <text evidence="6">Proteolytically cleaved by a tryspin-like protease which is likely to activate grass.</text>
</comment>
<comment type="disruption phenotype">
    <text evidence="4 5">Results in increased susceptibility to fungal or Gram-positive bacterial infection and failure to induce the expression of the Toll pathway-activated antifungal peptide Drs (PubMed:18724373). siRNA-mediated knockdown results in increased susceptibility to Gram-positive bacterial infection and severe reduction in the expression of the antifungal peptide Drs (PubMed:16631589). In a protease psh mutant background, complete loss of Drs induction and increased susceptibility to Gram-positive bacterial infection (PubMed:18724373).</text>
</comment>
<comment type="similarity">
    <text evidence="3">Belongs to the peptidase S1 family. CLIP subfamily.</text>
</comment>
<comment type="sequence caution" evidence="8">
    <conflict type="erroneous initiation">
        <sequence resource="EMBL-CDS" id="AAM52037"/>
    </conflict>
    <text>Extended N-terminus.</text>
</comment>
<reference evidence="13" key="1">
    <citation type="journal article" date="2000" name="Science">
        <title>The genome sequence of Drosophila melanogaster.</title>
        <authorList>
            <person name="Adams M.D."/>
            <person name="Celniker S.E."/>
            <person name="Holt R.A."/>
            <person name="Evans C.A."/>
            <person name="Gocayne J.D."/>
            <person name="Amanatides P.G."/>
            <person name="Scherer S.E."/>
            <person name="Li P.W."/>
            <person name="Hoskins R.A."/>
            <person name="Galle R.F."/>
            <person name="George R.A."/>
            <person name="Lewis S.E."/>
            <person name="Richards S."/>
            <person name="Ashburner M."/>
            <person name="Henderson S.N."/>
            <person name="Sutton G.G."/>
            <person name="Wortman J.R."/>
            <person name="Yandell M.D."/>
            <person name="Zhang Q."/>
            <person name="Chen L.X."/>
            <person name="Brandon R.C."/>
            <person name="Rogers Y.-H.C."/>
            <person name="Blazej R.G."/>
            <person name="Champe M."/>
            <person name="Pfeiffer B.D."/>
            <person name="Wan K.H."/>
            <person name="Doyle C."/>
            <person name="Baxter E.G."/>
            <person name="Helt G."/>
            <person name="Nelson C.R."/>
            <person name="Miklos G.L.G."/>
            <person name="Abril J.F."/>
            <person name="Agbayani A."/>
            <person name="An H.-J."/>
            <person name="Andrews-Pfannkoch C."/>
            <person name="Baldwin D."/>
            <person name="Ballew R.M."/>
            <person name="Basu A."/>
            <person name="Baxendale J."/>
            <person name="Bayraktaroglu L."/>
            <person name="Beasley E.M."/>
            <person name="Beeson K.Y."/>
            <person name="Benos P.V."/>
            <person name="Berman B.P."/>
            <person name="Bhandari D."/>
            <person name="Bolshakov S."/>
            <person name="Borkova D."/>
            <person name="Botchan M.R."/>
            <person name="Bouck J."/>
            <person name="Brokstein P."/>
            <person name="Brottier P."/>
            <person name="Burtis K.C."/>
            <person name="Busam D.A."/>
            <person name="Butler H."/>
            <person name="Cadieu E."/>
            <person name="Center A."/>
            <person name="Chandra I."/>
            <person name="Cherry J.M."/>
            <person name="Cawley S."/>
            <person name="Dahlke C."/>
            <person name="Davenport L.B."/>
            <person name="Davies P."/>
            <person name="de Pablos B."/>
            <person name="Delcher A."/>
            <person name="Deng Z."/>
            <person name="Mays A.D."/>
            <person name="Dew I."/>
            <person name="Dietz S.M."/>
            <person name="Dodson K."/>
            <person name="Doup L.E."/>
            <person name="Downes M."/>
            <person name="Dugan-Rocha S."/>
            <person name="Dunkov B.C."/>
            <person name="Dunn P."/>
            <person name="Durbin K.J."/>
            <person name="Evangelista C.C."/>
            <person name="Ferraz C."/>
            <person name="Ferriera S."/>
            <person name="Fleischmann W."/>
            <person name="Fosler C."/>
            <person name="Gabrielian A.E."/>
            <person name="Garg N.S."/>
            <person name="Gelbart W.M."/>
            <person name="Glasser K."/>
            <person name="Glodek A."/>
            <person name="Gong F."/>
            <person name="Gorrell J.H."/>
            <person name="Gu Z."/>
            <person name="Guan P."/>
            <person name="Harris M."/>
            <person name="Harris N.L."/>
            <person name="Harvey D.A."/>
            <person name="Heiman T.J."/>
            <person name="Hernandez J.R."/>
            <person name="Houck J."/>
            <person name="Hostin D."/>
            <person name="Houston K.A."/>
            <person name="Howland T.J."/>
            <person name="Wei M.-H."/>
            <person name="Ibegwam C."/>
            <person name="Jalali M."/>
            <person name="Kalush F."/>
            <person name="Karpen G.H."/>
            <person name="Ke Z."/>
            <person name="Kennison J.A."/>
            <person name="Ketchum K.A."/>
            <person name="Kimmel B.E."/>
            <person name="Kodira C.D."/>
            <person name="Kraft C.L."/>
            <person name="Kravitz S."/>
            <person name="Kulp D."/>
            <person name="Lai Z."/>
            <person name="Lasko P."/>
            <person name="Lei Y."/>
            <person name="Levitsky A.A."/>
            <person name="Li J.H."/>
            <person name="Li Z."/>
            <person name="Liang Y."/>
            <person name="Lin X."/>
            <person name="Liu X."/>
            <person name="Mattei B."/>
            <person name="McIntosh T.C."/>
            <person name="McLeod M.P."/>
            <person name="McPherson D."/>
            <person name="Merkulov G."/>
            <person name="Milshina N.V."/>
            <person name="Mobarry C."/>
            <person name="Morris J."/>
            <person name="Moshrefi A."/>
            <person name="Mount S.M."/>
            <person name="Moy M."/>
            <person name="Murphy B."/>
            <person name="Murphy L."/>
            <person name="Muzny D.M."/>
            <person name="Nelson D.L."/>
            <person name="Nelson D.R."/>
            <person name="Nelson K.A."/>
            <person name="Nixon K."/>
            <person name="Nusskern D.R."/>
            <person name="Pacleb J.M."/>
            <person name="Palazzolo M."/>
            <person name="Pittman G.S."/>
            <person name="Pan S."/>
            <person name="Pollard J."/>
            <person name="Puri V."/>
            <person name="Reese M.G."/>
            <person name="Reinert K."/>
            <person name="Remington K."/>
            <person name="Saunders R.D.C."/>
            <person name="Scheeler F."/>
            <person name="Shen H."/>
            <person name="Shue B.C."/>
            <person name="Siden-Kiamos I."/>
            <person name="Simpson M."/>
            <person name="Skupski M.P."/>
            <person name="Smith T.J."/>
            <person name="Spier E."/>
            <person name="Spradling A.C."/>
            <person name="Stapleton M."/>
            <person name="Strong R."/>
            <person name="Sun E."/>
            <person name="Svirskas R."/>
            <person name="Tector C."/>
            <person name="Turner R."/>
            <person name="Venter E."/>
            <person name="Wang A.H."/>
            <person name="Wang X."/>
            <person name="Wang Z.-Y."/>
            <person name="Wassarman D.A."/>
            <person name="Weinstock G.M."/>
            <person name="Weissenbach J."/>
            <person name="Williams S.M."/>
            <person name="Woodage T."/>
            <person name="Worley K.C."/>
            <person name="Wu D."/>
            <person name="Yang S."/>
            <person name="Yao Q.A."/>
            <person name="Ye J."/>
            <person name="Yeh R.-F."/>
            <person name="Zaveri J.S."/>
            <person name="Zhan M."/>
            <person name="Zhang G."/>
            <person name="Zhao Q."/>
            <person name="Zheng L."/>
            <person name="Zheng X.H."/>
            <person name="Zhong F.N."/>
            <person name="Zhong W."/>
            <person name="Zhou X."/>
            <person name="Zhu S.C."/>
            <person name="Zhu X."/>
            <person name="Smith H.O."/>
            <person name="Gibbs R.A."/>
            <person name="Myers E.W."/>
            <person name="Rubin G.M."/>
            <person name="Venter J.C."/>
        </authorList>
    </citation>
    <scope>NUCLEOTIDE SEQUENCE [LARGE SCALE GENOMIC DNA]</scope>
    <source>
        <strain evidence="13">Berkeley</strain>
    </source>
</reference>
<reference evidence="13" key="2">
    <citation type="journal article" date="2002" name="Genome Biol.">
        <title>Annotation of the Drosophila melanogaster euchromatic genome: a systematic review.</title>
        <authorList>
            <person name="Misra S."/>
            <person name="Crosby M.A."/>
            <person name="Mungall C.J."/>
            <person name="Matthews B.B."/>
            <person name="Campbell K.S."/>
            <person name="Hradecky P."/>
            <person name="Huang Y."/>
            <person name="Kaminker J.S."/>
            <person name="Millburn G.H."/>
            <person name="Prochnik S.E."/>
            <person name="Smith C.D."/>
            <person name="Tupy J.L."/>
            <person name="Whitfield E.J."/>
            <person name="Bayraktaroglu L."/>
            <person name="Berman B.P."/>
            <person name="Bettencourt B.R."/>
            <person name="Celniker S.E."/>
            <person name="de Grey A.D.N.J."/>
            <person name="Drysdale R.A."/>
            <person name="Harris N.L."/>
            <person name="Richter J."/>
            <person name="Russo S."/>
            <person name="Schroeder A.J."/>
            <person name="Shu S.Q."/>
            <person name="Stapleton M."/>
            <person name="Yamada C."/>
            <person name="Ashburner M."/>
            <person name="Gelbart W.M."/>
            <person name="Rubin G.M."/>
            <person name="Lewis S.E."/>
        </authorList>
    </citation>
    <scope>GENOME REANNOTATION</scope>
    <source>
        <strain evidence="13">Berkeley</strain>
    </source>
</reference>
<reference evidence="10" key="3">
    <citation type="journal article" date="2002" name="Genome Biol.">
        <title>A Drosophila full-length cDNA resource.</title>
        <authorList>
            <person name="Stapleton M."/>
            <person name="Carlson J.W."/>
            <person name="Brokstein P."/>
            <person name="Yu C."/>
            <person name="Champe M."/>
            <person name="George R.A."/>
            <person name="Guarin H."/>
            <person name="Kronmiller B."/>
            <person name="Pacleb J.M."/>
            <person name="Park S."/>
            <person name="Wan K.H."/>
            <person name="Rubin G.M."/>
            <person name="Celniker S.E."/>
        </authorList>
    </citation>
    <scope>NUCLEOTIDE SEQUENCE [LARGE SCALE MRNA] (ISOFORM B)</scope>
    <source>
        <strain evidence="10">Berkeley</strain>
        <tissue evidence="10">Head</tissue>
    </source>
</reference>
<reference evidence="11" key="4">
    <citation type="submission" date="2003-01" db="EMBL/GenBank/DDBJ databases">
        <authorList>
            <person name="Stapleton M."/>
            <person name="Brokstein P."/>
            <person name="Hong L."/>
            <person name="Agbayani A."/>
            <person name="Carlson J."/>
            <person name="Champe M."/>
            <person name="Chavez C."/>
            <person name="Dorsett V."/>
            <person name="Dresnek D."/>
            <person name="Farfan D."/>
            <person name="Frise E."/>
            <person name="George R."/>
            <person name="Gonzalez M."/>
            <person name="Guarin H."/>
            <person name="Kronmiller B."/>
            <person name="Li P."/>
            <person name="Liao G."/>
            <person name="Miranda A."/>
            <person name="Mungall C.J."/>
            <person name="Nunoo J."/>
            <person name="Pacleb J."/>
            <person name="Paragas V."/>
            <person name="Park S."/>
            <person name="Patel S."/>
            <person name="Phouanenavong S."/>
            <person name="Wan K."/>
            <person name="Yu C."/>
            <person name="Lewis S.E."/>
            <person name="Rubin G.M."/>
            <person name="Celniker S."/>
        </authorList>
    </citation>
    <scope>NUCLEOTIDE SEQUENCE [LARGE SCALE MRNA] (ISOFORM A)</scope>
    <source>
        <strain evidence="11">Berkeley</strain>
        <tissue evidence="11">Larva</tissue>
        <tissue evidence="11">Pupae</tissue>
    </source>
</reference>
<reference evidence="14" key="5">
    <citation type="journal article" date="2011" name="J. Biol. Chem.">
        <title>Structure-function analysis of grass clip serine protease involved in Drosophila Toll pathway activation.</title>
        <authorList>
            <person name="Kellenberger C."/>
            <person name="Leone P."/>
            <person name="Coquet L."/>
            <person name="Jouenne T."/>
            <person name="Reichhart J.M."/>
            <person name="Roussel A."/>
        </authorList>
    </citation>
    <scope>PROTEIN SEQUENCE OF 27-30</scope>
    <scope>X-RAY CRYSTALLOGRAPHY (1.80 ANGSTROMS) IN COMPLEX WITH CALCIUM</scope>
    <scope>SUBUNIT</scope>
    <scope>SUBCELLULAR LOCATION</scope>
    <scope>DOMAIN</scope>
    <scope>PROTEOLYTIC CLEAVAGE</scope>
    <scope>GLYCOSYLATION AT ASN-230 AND ASN-270</scope>
    <scope>DISULFIDE BONDS</scope>
</reference>
<reference evidence="8" key="6">
    <citation type="journal article" date="2006" name="Curr. Biol.">
        <title>Drosophila immunity: a large-scale in vivo RNAi screen identifies five serine proteases required for Toll activation.</title>
        <authorList>
            <person name="Kambris Z."/>
            <person name="Brun S."/>
            <person name="Jang I.H."/>
            <person name="Nam H.J."/>
            <person name="Romeo Y."/>
            <person name="Takahashi K."/>
            <person name="Lee W.J."/>
            <person name="Ueda R."/>
            <person name="Lemaitre B."/>
        </authorList>
    </citation>
    <scope>FUNCTION</scope>
    <scope>DISRUPTION PHENOTYPE</scope>
</reference>
<reference evidence="8" key="7">
    <citation type="journal article" date="2008" name="Nat. Immunol.">
        <title>Sensing of 'danger signals' and pathogen-associated molecular patterns defines binary signaling pathways 'upstream' of Toll.</title>
        <authorList>
            <person name="El Chamy L."/>
            <person name="Leclerc V."/>
            <person name="Caldelari I."/>
            <person name="Reichhart J.M."/>
        </authorList>
    </citation>
    <scope>FUNCTION</scope>
    <scope>DISRUPTION PHENOTYPE</scope>
</reference>
<protein>
    <recommendedName>
        <fullName evidence="8">Serine protease grass</fullName>
        <ecNumber evidence="2">3.4.21.-</ecNumber>
    </recommendedName>
    <alternativeName>
        <fullName evidence="7">Gram-positive specific serine protease</fullName>
    </alternativeName>
</protein>
<feature type="signal peptide" evidence="6">
    <location>
        <begin position="1"/>
        <end position="26"/>
    </location>
</feature>
<feature type="chain" id="PRO_5004335652" description="Serine protease grass" evidence="9">
    <location>
        <begin position="27"/>
        <end position="377"/>
    </location>
</feature>
<feature type="domain" description="Clip" evidence="3">
    <location>
        <begin position="31"/>
        <end position="89"/>
    </location>
</feature>
<feature type="domain" description="Peptidase S1" evidence="2">
    <location>
        <begin position="119"/>
        <end position="373"/>
    </location>
</feature>
<feature type="region of interest" description="Linker" evidence="6">
    <location>
        <begin position="91"/>
        <end position="118"/>
    </location>
</feature>
<feature type="active site" description="Charge relay system" evidence="2">
    <location>
        <position position="163"/>
    </location>
</feature>
<feature type="active site" description="Charge relay system" evidence="2">
    <location>
        <position position="223"/>
    </location>
</feature>
<feature type="active site" description="Charge relay system" evidence="2">
    <location>
        <position position="318"/>
    </location>
</feature>
<feature type="binding site" evidence="6 14">
    <location>
        <position position="179"/>
    </location>
    <ligand>
        <name>Ca(2+)</name>
        <dbReference type="ChEBI" id="CHEBI:29108"/>
    </ligand>
</feature>
<feature type="binding site" evidence="6 14">
    <location>
        <position position="181"/>
    </location>
    <ligand>
        <name>Ca(2+)</name>
        <dbReference type="ChEBI" id="CHEBI:29108"/>
    </ligand>
</feature>
<feature type="binding site" evidence="6 14">
    <location>
        <position position="184"/>
    </location>
    <ligand>
        <name>Ca(2+)</name>
        <dbReference type="ChEBI" id="CHEBI:29108"/>
    </ligand>
</feature>
<feature type="binding site" evidence="6 14">
    <location>
        <position position="187"/>
    </location>
    <ligand>
        <name>Ca(2+)</name>
        <dbReference type="ChEBI" id="CHEBI:29108"/>
    </ligand>
</feature>
<feature type="glycosylation site" description="N-linked (GlcNAc...) asparagine" evidence="6 14">
    <location>
        <position position="230"/>
    </location>
</feature>
<feature type="glycosylation site" description="N-linked (GlcNAc...) asparagine" evidence="6 14">
    <location>
        <position position="270"/>
    </location>
</feature>
<feature type="disulfide bond" evidence="3 6 14">
    <location>
        <begin position="32"/>
        <end position="88"/>
    </location>
</feature>
<feature type="disulfide bond" evidence="3 6 14">
    <location>
        <begin position="42"/>
        <end position="78"/>
    </location>
</feature>
<feature type="disulfide bond" evidence="3 6 14">
    <location>
        <begin position="48"/>
        <end position="89"/>
    </location>
</feature>
<feature type="disulfide bond" evidence="6 14">
    <location>
        <begin position="111"/>
        <end position="243"/>
    </location>
</feature>
<feature type="disulfide bond" evidence="6 14">
    <location>
        <begin position="148"/>
        <end position="164"/>
    </location>
</feature>
<feature type="disulfide bond" evidence="6 14">
    <location>
        <begin position="188"/>
        <end position="197"/>
    </location>
</feature>
<feature type="disulfide bond" evidence="6 14">
    <location>
        <begin position="290"/>
        <end position="304"/>
    </location>
</feature>
<feature type="disulfide bond" evidence="6 14">
    <location>
        <begin position="314"/>
        <end position="349"/>
    </location>
</feature>
<feature type="splice variant" id="VSP_059329" description="In isoform A." evidence="8">
    <location>
        <begin position="1"/>
        <end position="42"/>
    </location>
</feature>
<feature type="strand" evidence="15">
    <location>
        <begin position="31"/>
        <end position="33"/>
    </location>
</feature>
<feature type="strand" evidence="15">
    <location>
        <begin position="39"/>
        <end position="44"/>
    </location>
</feature>
<feature type="helix" evidence="15">
    <location>
        <begin position="45"/>
        <end position="47"/>
    </location>
</feature>
<feature type="helix" evidence="15">
    <location>
        <begin position="49"/>
        <end position="60"/>
    </location>
</feature>
<feature type="helix" evidence="15">
    <location>
        <begin position="67"/>
        <end position="76"/>
    </location>
</feature>
<feature type="strand" evidence="15">
    <location>
        <begin position="77"/>
        <end position="81"/>
    </location>
</feature>
<feature type="strand" evidence="15">
    <location>
        <begin position="84"/>
        <end position="90"/>
    </location>
</feature>
<feature type="helix" evidence="15">
    <location>
        <begin position="91"/>
        <end position="93"/>
    </location>
</feature>
<feature type="helix" evidence="15">
    <location>
        <begin position="98"/>
        <end position="104"/>
    </location>
</feature>
<feature type="strand" evidence="15">
    <location>
        <begin position="133"/>
        <end position="139"/>
    </location>
</feature>
<feature type="strand" evidence="15">
    <location>
        <begin position="141"/>
        <end position="154"/>
    </location>
</feature>
<feature type="strand" evidence="15">
    <location>
        <begin position="157"/>
        <end position="160"/>
    </location>
</feature>
<feature type="helix" evidence="15">
    <location>
        <begin position="162"/>
        <end position="164"/>
    </location>
</feature>
<feature type="turn" evidence="15">
    <location>
        <begin position="165"/>
        <end position="167"/>
    </location>
</feature>
<feature type="turn" evidence="15">
    <location>
        <begin position="169"/>
        <end position="171"/>
    </location>
</feature>
<feature type="strand" evidence="15">
    <location>
        <begin position="172"/>
        <end position="178"/>
    </location>
</feature>
<feature type="strand" evidence="15">
    <location>
        <begin position="188"/>
        <end position="191"/>
    </location>
</feature>
<feature type="strand" evidence="15">
    <location>
        <begin position="194"/>
        <end position="197"/>
    </location>
</feature>
<feature type="strand" evidence="15">
    <location>
        <begin position="202"/>
        <end position="211"/>
    </location>
</feature>
<feature type="turn" evidence="15">
    <location>
        <begin position="217"/>
        <end position="220"/>
    </location>
</feature>
<feature type="strand" evidence="15">
    <location>
        <begin position="225"/>
        <end position="231"/>
    </location>
</feature>
<feature type="helix" evidence="15">
    <location>
        <begin position="248"/>
        <end position="253"/>
    </location>
</feature>
<feature type="turn" evidence="15">
    <location>
        <begin position="254"/>
        <end position="256"/>
    </location>
</feature>
<feature type="strand" evidence="15">
    <location>
        <begin position="258"/>
        <end position="264"/>
    </location>
</feature>
<feature type="strand" evidence="15">
    <location>
        <begin position="278"/>
        <end position="285"/>
    </location>
</feature>
<feature type="helix" evidence="15">
    <location>
        <begin position="287"/>
        <end position="294"/>
    </location>
</feature>
<feature type="strand" evidence="15">
    <location>
        <begin position="302"/>
        <end position="305"/>
    </location>
</feature>
<feature type="strand" evidence="15">
    <location>
        <begin position="310"/>
        <end position="312"/>
    </location>
</feature>
<feature type="helix" evidence="15">
    <location>
        <begin position="313"/>
        <end position="315"/>
    </location>
</feature>
<feature type="strand" evidence="15">
    <location>
        <begin position="321"/>
        <end position="326"/>
    </location>
</feature>
<feature type="strand" evidence="15">
    <location>
        <begin position="335"/>
        <end position="344"/>
    </location>
</feature>
<feature type="strand" evidence="15">
    <location>
        <begin position="356"/>
        <end position="360"/>
    </location>
</feature>
<feature type="helix" evidence="15">
    <location>
        <begin position="361"/>
        <end position="364"/>
    </location>
</feature>
<feature type="helix" evidence="15">
    <location>
        <begin position="365"/>
        <end position="375"/>
    </location>
</feature>
<evidence type="ECO:0000250" key="1">
    <source>
        <dbReference type="UniProtKB" id="Q9XXV0"/>
    </source>
</evidence>
<evidence type="ECO:0000255" key="2">
    <source>
        <dbReference type="PROSITE-ProRule" id="PRU00274"/>
    </source>
</evidence>
<evidence type="ECO:0000255" key="3">
    <source>
        <dbReference type="PROSITE-ProRule" id="PRU01236"/>
    </source>
</evidence>
<evidence type="ECO:0000269" key="4">
    <source>
    </source>
</evidence>
<evidence type="ECO:0000269" key="5">
    <source>
    </source>
</evidence>
<evidence type="ECO:0000269" key="6">
    <source>
    </source>
</evidence>
<evidence type="ECO:0000303" key="7">
    <source>
    </source>
</evidence>
<evidence type="ECO:0000305" key="8"/>
<evidence type="ECO:0000305" key="9">
    <source>
    </source>
</evidence>
<evidence type="ECO:0000312" key="10">
    <source>
        <dbReference type="EMBL" id="AAM52037.1"/>
    </source>
</evidence>
<evidence type="ECO:0000312" key="11">
    <source>
        <dbReference type="EMBL" id="AAO24994.1"/>
    </source>
</evidence>
<evidence type="ECO:0000312" key="12">
    <source>
        <dbReference type="FlyBase" id="FBgn0039494"/>
    </source>
</evidence>
<evidence type="ECO:0000312" key="13">
    <source>
        <dbReference type="Proteomes" id="UP000000803"/>
    </source>
</evidence>
<evidence type="ECO:0007744" key="14">
    <source>
        <dbReference type="PDB" id="2XXL"/>
    </source>
</evidence>
<evidence type="ECO:0007829" key="15">
    <source>
        <dbReference type="PDB" id="2XXL"/>
    </source>
</evidence>
<gene>
    <name evidence="7 12" type="primary">grass</name>
    <name evidence="12" type="synonym">c-SP1</name>
    <name evidence="12" type="ORF">CG5896</name>
</gene>
<sequence length="377" mass="41511">MMIASSLAVLYGIAIVSSMGVQSARADYADDCTTPDGDQGQCMPFSSCRTIEERLTEAQKAGQKVPADYASYLQKALCGEFNGVRHFCCPSANIQHNSKVMSLFKDENFDCGNFLSQRVSNGYEVKLSSRPWMALLRYQQFGESRFLCGGAMISERYILTAAHCVHGLQNDLYEIRLGEHRISTEEDCRQQGRKKKCAPPVVNVGIEKHLIHEKYDARHIMHDIALLKLNRSVPFQKHIKPICLPITDELKEKAEQISTYFVTGWGTTENGSSSDVLLQANVPLQPRSACSQAYRRAVPLSQLCVGGGDLQDSCKGDSGGPLQAPAQYLGEYAPKMVEFGIVSQGVVTCGQISLPGLYTNVGEYVQWITDTMASNGL</sequence>
<organism evidence="13">
    <name type="scientific">Drosophila melanogaster</name>
    <name type="common">Fruit fly</name>
    <dbReference type="NCBI Taxonomy" id="7227"/>
    <lineage>
        <taxon>Eukaryota</taxon>
        <taxon>Metazoa</taxon>
        <taxon>Ecdysozoa</taxon>
        <taxon>Arthropoda</taxon>
        <taxon>Hexapoda</taxon>
        <taxon>Insecta</taxon>
        <taxon>Pterygota</taxon>
        <taxon>Neoptera</taxon>
        <taxon>Endopterygota</taxon>
        <taxon>Diptera</taxon>
        <taxon>Brachycera</taxon>
        <taxon>Muscomorpha</taxon>
        <taxon>Ephydroidea</taxon>
        <taxon>Drosophilidae</taxon>
        <taxon>Drosophila</taxon>
        <taxon>Sophophora</taxon>
    </lineage>
</organism>
<accession>Q9VB68</accession>
<accession>Q86PB3</accession>
<accession>Q8MR95</accession>
<accession>Q9VB67</accession>
<keyword id="KW-0002">3D-structure</keyword>
<keyword id="KW-0025">Alternative splicing</keyword>
<keyword id="KW-0106">Calcium</keyword>
<keyword id="KW-0903">Direct protein sequencing</keyword>
<keyword id="KW-1015">Disulfide bond</keyword>
<keyword id="KW-0325">Glycoprotein</keyword>
<keyword id="KW-0378">Hydrolase</keyword>
<keyword id="KW-0391">Immunity</keyword>
<keyword id="KW-0399">Innate immunity</keyword>
<keyword id="KW-0479">Metal-binding</keyword>
<keyword id="KW-0645">Protease</keyword>
<keyword id="KW-1185">Reference proteome</keyword>
<keyword id="KW-0964">Secreted</keyword>
<keyword id="KW-0720">Serine protease</keyword>
<keyword id="KW-0732">Signal</keyword>
<keyword id="KW-0865">Zymogen</keyword>